<organismHost>
    <name type="scientific">Homo sapiens</name>
    <name type="common">Human</name>
    <dbReference type="NCBI Taxonomy" id="9606"/>
</organismHost>
<organism>
    <name type="scientific">Human cytomegalovirus (strain AD169)</name>
    <name type="common">HHV-5</name>
    <name type="synonym">Human herpesvirus 5</name>
    <dbReference type="NCBI Taxonomy" id="10360"/>
    <lineage>
        <taxon>Viruses</taxon>
        <taxon>Duplodnaviria</taxon>
        <taxon>Heunggongvirae</taxon>
        <taxon>Peploviricota</taxon>
        <taxon>Herviviricetes</taxon>
        <taxon>Herpesvirales</taxon>
        <taxon>Orthoherpesviridae</taxon>
        <taxon>Betaherpesvirinae</taxon>
        <taxon>Cytomegalovirus</taxon>
        <taxon>Cytomegalovirus humanbeta5</taxon>
        <taxon>Human cytomegalovirus</taxon>
    </lineage>
</organism>
<sequence>MTSVNKQLLKDVMRVDLERQQHQFLRRTYGPQHRLTTQQALTVMRVAAREQTRYSQRTTQCVAAHLLEQRAAVQQELQRARQLQSGNVDDALDSLTELKDTVDDVRATLVDSVSATCDLDLEVDDAV</sequence>
<protein>
    <recommendedName>
        <fullName>Protein UL96</fullName>
    </recommendedName>
</protein>
<feature type="chain" id="PRO_0000116253" description="Protein UL96">
    <location>
        <begin position="1"/>
        <end position="127"/>
    </location>
</feature>
<evidence type="ECO:0000305" key="1"/>
<gene>
    <name type="primary">UL96</name>
</gene>
<name>UL96_HCMVA</name>
<keyword id="KW-1185">Reference proteome</keyword>
<keyword id="KW-0946">Virion</keyword>
<comment type="subcellular location">
    <subcellularLocation>
        <location>Virion</location>
    </subcellularLocation>
</comment>
<comment type="similarity">
    <text evidence="1">Belongs to the herpesviridae UL96 family.</text>
</comment>
<comment type="sequence caution" evidence="1">
    <conflict type="erroneous initiation">
        <sequence resource="EMBL-CDS" id="CAA35370"/>
    </conflict>
</comment>
<reference key="1">
    <citation type="journal article" date="1990" name="Curr. Top. Microbiol. Immunol.">
        <title>Analysis of the protein-coding content of the sequence of human cytomegalovirus strain AD169.</title>
        <authorList>
            <person name="Chee M.S."/>
            <person name="Bankier A.T."/>
            <person name="Beck S."/>
            <person name="Bohni R."/>
            <person name="Brown C.M."/>
            <person name="Cerny R."/>
            <person name="Horsnell T."/>
            <person name="Hutchison C.A. III"/>
            <person name="Kouzarides T."/>
            <person name="Martignetti J.A."/>
            <person name="Preddie E."/>
            <person name="Satchwell S.C."/>
            <person name="Tomlinson P."/>
            <person name="Weston K.M."/>
            <person name="Barrell B.G."/>
        </authorList>
    </citation>
    <scope>NUCLEOTIDE SEQUENCE [LARGE SCALE GENOMIC DNA]</scope>
</reference>
<reference key="2">
    <citation type="journal article" date="2003" name="J. Gen. Virol.">
        <title>The human cytomegalovirus genome revisited: comparison with the chimpanzee cytomegalovirus genome.</title>
        <authorList>
            <person name="Davison A.J."/>
            <person name="Dolan A."/>
            <person name="Akter P."/>
            <person name="Addison C."/>
            <person name="Dargan D.J."/>
            <person name="Alcendor D.J."/>
            <person name="McGeoch D.J."/>
            <person name="Hayward G.S."/>
        </authorList>
    </citation>
    <scope>GENOME REANNOTATION</scope>
</reference>
<reference key="3">
    <citation type="journal article" date="2003" name="J. Gen. Virol.">
        <authorList>
            <person name="Davison A.J."/>
            <person name="Dolan A."/>
            <person name="Akter P."/>
            <person name="Addison C."/>
            <person name="Dargan D.J."/>
            <person name="Alcendor D.J."/>
            <person name="McGeoch D.J."/>
            <person name="Hayward G.S."/>
        </authorList>
    </citation>
    <scope>ERRATUM OF PUBMED:12533697</scope>
</reference>
<reference key="4">
    <citation type="journal article" date="2004" name="J. Virol.">
        <title>Identification of proteins in human cytomegalovirus (HCMV) particles: the HCMV proteome.</title>
        <authorList>
            <person name="Varnum S.M."/>
            <person name="Streblow D.N."/>
            <person name="Monroe M.E."/>
            <person name="Smith P."/>
            <person name="Auberry K.J."/>
            <person name="Pasa-Tolic L."/>
            <person name="Wang D."/>
            <person name="Camp D.G. II"/>
            <person name="Rodland K."/>
            <person name="Wiley S."/>
            <person name="Britt W."/>
            <person name="Shenk T."/>
            <person name="Smith R.D."/>
            <person name="Nelson J.A."/>
        </authorList>
    </citation>
    <scope>IDENTIFICATION</scope>
</reference>
<reference key="5">
    <citation type="journal article" date="2004" name="J. Virol.">
        <authorList>
            <person name="Varnum S.M."/>
            <person name="Streblow D.N."/>
            <person name="Monroe M.E."/>
            <person name="Smith P."/>
            <person name="Auberry K.J."/>
            <person name="Pasa-Tolic L."/>
            <person name="Wang D."/>
            <person name="Camp D.G. II"/>
            <person name="Rodland K."/>
            <person name="Wiley S."/>
            <person name="Britt W."/>
            <person name="Shenk T."/>
            <person name="Smith R.D."/>
            <person name="Nelson J.A."/>
        </authorList>
    </citation>
    <scope>ERRATUM OF PUBMED:15452216</scope>
</reference>
<accession>P16787</accession>
<accession>Q7M6J5</accession>
<proteinExistence type="inferred from homology"/>
<dbReference type="EMBL" id="X17403">
    <property type="protein sequence ID" value="CAA35370.1"/>
    <property type="status" value="ALT_INIT"/>
    <property type="molecule type" value="Genomic_DNA"/>
</dbReference>
<dbReference type="EMBL" id="BK000394">
    <property type="protein sequence ID" value="DAA00193.1"/>
    <property type="molecule type" value="Genomic_DNA"/>
</dbReference>
<dbReference type="PIR" id="S09861">
    <property type="entry name" value="S09861"/>
</dbReference>
<dbReference type="RefSeq" id="YP_081543.1">
    <property type="nucleotide sequence ID" value="NC_006273.2"/>
</dbReference>
<dbReference type="SMR" id="P16787"/>
<dbReference type="DNASU" id="3077498"/>
<dbReference type="GeneID" id="3077498"/>
<dbReference type="KEGG" id="vg:3077498"/>
<dbReference type="Proteomes" id="UP000008991">
    <property type="component" value="Segment"/>
</dbReference>
<dbReference type="Proteomes" id="UP000008992">
    <property type="component" value="Segment"/>
</dbReference>
<dbReference type="GO" id="GO:0044423">
    <property type="term" value="C:virion component"/>
    <property type="evidence" value="ECO:0007669"/>
    <property type="project" value="UniProtKB-KW"/>
</dbReference>
<dbReference type="InterPro" id="IPR022614">
    <property type="entry name" value="Herpesvirus_UL96"/>
</dbReference>
<dbReference type="Pfam" id="PF10867">
    <property type="entry name" value="DUF2664"/>
    <property type="match status" value="1"/>
</dbReference>